<comment type="function">
    <text evidence="1">The AROM polypeptide catalyzes 5 consecutive enzymatic reactions in prechorismate polyaromatic amino acid biosynthesis.</text>
</comment>
<comment type="catalytic activity">
    <reaction evidence="1">
        <text>7-phospho-2-dehydro-3-deoxy-D-arabino-heptonate = 3-dehydroquinate + phosphate</text>
        <dbReference type="Rhea" id="RHEA:21968"/>
        <dbReference type="ChEBI" id="CHEBI:32364"/>
        <dbReference type="ChEBI" id="CHEBI:43474"/>
        <dbReference type="ChEBI" id="CHEBI:58394"/>
        <dbReference type="EC" id="4.2.3.4"/>
    </reaction>
</comment>
<comment type="catalytic activity">
    <reaction evidence="1">
        <text>3-dehydroquinate = 3-dehydroshikimate + H2O</text>
        <dbReference type="Rhea" id="RHEA:21096"/>
        <dbReference type="ChEBI" id="CHEBI:15377"/>
        <dbReference type="ChEBI" id="CHEBI:16630"/>
        <dbReference type="ChEBI" id="CHEBI:32364"/>
        <dbReference type="EC" id="4.2.1.10"/>
    </reaction>
</comment>
<comment type="catalytic activity">
    <reaction evidence="1">
        <text>shikimate + NADP(+) = 3-dehydroshikimate + NADPH + H(+)</text>
        <dbReference type="Rhea" id="RHEA:17737"/>
        <dbReference type="ChEBI" id="CHEBI:15378"/>
        <dbReference type="ChEBI" id="CHEBI:16630"/>
        <dbReference type="ChEBI" id="CHEBI:36208"/>
        <dbReference type="ChEBI" id="CHEBI:57783"/>
        <dbReference type="ChEBI" id="CHEBI:58349"/>
        <dbReference type="EC" id="1.1.1.25"/>
    </reaction>
</comment>
<comment type="catalytic activity">
    <reaction evidence="1">
        <text>shikimate + ATP = 3-phosphoshikimate + ADP + H(+)</text>
        <dbReference type="Rhea" id="RHEA:13121"/>
        <dbReference type="ChEBI" id="CHEBI:15378"/>
        <dbReference type="ChEBI" id="CHEBI:30616"/>
        <dbReference type="ChEBI" id="CHEBI:36208"/>
        <dbReference type="ChEBI" id="CHEBI:145989"/>
        <dbReference type="ChEBI" id="CHEBI:456216"/>
        <dbReference type="EC" id="2.7.1.71"/>
    </reaction>
</comment>
<comment type="catalytic activity">
    <reaction evidence="1">
        <text>3-phosphoshikimate + phosphoenolpyruvate = 5-O-(1-carboxyvinyl)-3-phosphoshikimate + phosphate</text>
        <dbReference type="Rhea" id="RHEA:21256"/>
        <dbReference type="ChEBI" id="CHEBI:43474"/>
        <dbReference type="ChEBI" id="CHEBI:57701"/>
        <dbReference type="ChEBI" id="CHEBI:58702"/>
        <dbReference type="ChEBI" id="CHEBI:145989"/>
        <dbReference type="EC" id="2.5.1.19"/>
    </reaction>
</comment>
<comment type="cofactor">
    <cofactor>
        <name>Zn(2+)</name>
        <dbReference type="ChEBI" id="CHEBI:29105"/>
    </cofactor>
    <text>Binds 2 Zn(2+) ions per subunit.</text>
</comment>
<comment type="pathway">
    <text evidence="1">Metabolic intermediate biosynthesis; chorismate biosynthesis; chorismate from D-erythrose 4-phosphate and phosphoenolpyruvate: step 2/7.</text>
</comment>
<comment type="pathway">
    <text evidence="1">Metabolic intermediate biosynthesis; chorismate biosynthesis; chorismate from D-erythrose 4-phosphate and phosphoenolpyruvate: step 3/7.</text>
</comment>
<comment type="pathway">
    <text evidence="1">Metabolic intermediate biosynthesis; chorismate biosynthesis; chorismate from D-erythrose 4-phosphate and phosphoenolpyruvate: step 4/7.</text>
</comment>
<comment type="pathway">
    <text evidence="1">Metabolic intermediate biosynthesis; chorismate biosynthesis; chorismate from D-erythrose 4-phosphate and phosphoenolpyruvate: step 5/7.</text>
</comment>
<comment type="pathway">
    <text evidence="1">Metabolic intermediate biosynthesis; chorismate biosynthesis; chorismate from D-erythrose 4-phosphate and phosphoenolpyruvate: step 6/7.</text>
</comment>
<comment type="subunit">
    <text evidence="1">Homodimer.</text>
</comment>
<comment type="subcellular location">
    <subcellularLocation>
        <location evidence="1">Cytoplasm</location>
    </subcellularLocation>
</comment>
<comment type="similarity">
    <text evidence="1">In the N-terminal section; belongs to the sugar phosphate cyclases superfamily. Dehydroquinate synthase family.</text>
</comment>
<comment type="similarity">
    <text evidence="1">In the 2nd section; belongs to the EPSP synthase family.</text>
</comment>
<comment type="similarity">
    <text evidence="1">In the 3rd section; belongs to the shikimate kinase family.</text>
</comment>
<comment type="similarity">
    <text evidence="1">In the 4th section; belongs to the type-I 3-dehydroquinase family.</text>
</comment>
<comment type="similarity">
    <text evidence="1">In the C-terminal section; belongs to the shikimate dehydrogenase family.</text>
</comment>
<gene>
    <name evidence="1" type="primary">aroM</name>
    <name type="ORF">ATEG_00581</name>
</gene>
<evidence type="ECO:0000255" key="1">
    <source>
        <dbReference type="HAMAP-Rule" id="MF_03143"/>
    </source>
</evidence>
<dbReference type="EC" id="4.2.3.4" evidence="1"/>
<dbReference type="EC" id="2.5.1.19" evidence="1"/>
<dbReference type="EC" id="2.7.1.71" evidence="1"/>
<dbReference type="EC" id="4.2.1.10" evidence="1"/>
<dbReference type="EC" id="1.1.1.25" evidence="1"/>
<dbReference type="EMBL" id="CH476594">
    <property type="protein sequence ID" value="EAU39227.1"/>
    <property type="molecule type" value="Genomic_DNA"/>
</dbReference>
<dbReference type="RefSeq" id="XP_001210667.1">
    <property type="nucleotide sequence ID" value="XM_001210667.1"/>
</dbReference>
<dbReference type="SMR" id="Q0D0F3"/>
<dbReference type="STRING" id="341663.Q0D0F3"/>
<dbReference type="EnsemblFungi" id="EAU39227">
    <property type="protein sequence ID" value="EAU39227"/>
    <property type="gene ID" value="ATEG_00581"/>
</dbReference>
<dbReference type="GeneID" id="4355335"/>
<dbReference type="VEuPathDB" id="FungiDB:ATEG_00581"/>
<dbReference type="eggNOG" id="KOG0692">
    <property type="taxonomic scope" value="Eukaryota"/>
</dbReference>
<dbReference type="HOGENOM" id="CLU_001201_1_2_1"/>
<dbReference type="OMA" id="SWANMSW"/>
<dbReference type="OrthoDB" id="197068at2759"/>
<dbReference type="UniPathway" id="UPA00053">
    <property type="reaction ID" value="UER00085"/>
</dbReference>
<dbReference type="UniPathway" id="UPA00053">
    <property type="reaction ID" value="UER00086"/>
</dbReference>
<dbReference type="UniPathway" id="UPA00053">
    <property type="reaction ID" value="UER00087"/>
</dbReference>
<dbReference type="UniPathway" id="UPA00053">
    <property type="reaction ID" value="UER00088"/>
</dbReference>
<dbReference type="UniPathway" id="UPA00053">
    <property type="reaction ID" value="UER00089"/>
</dbReference>
<dbReference type="Proteomes" id="UP000007963">
    <property type="component" value="Unassembled WGS sequence"/>
</dbReference>
<dbReference type="GO" id="GO:0005737">
    <property type="term" value="C:cytoplasm"/>
    <property type="evidence" value="ECO:0007669"/>
    <property type="project" value="UniProtKB-SubCell"/>
</dbReference>
<dbReference type="GO" id="GO:0003855">
    <property type="term" value="F:3-dehydroquinate dehydratase activity"/>
    <property type="evidence" value="ECO:0007669"/>
    <property type="project" value="UniProtKB-UniRule"/>
</dbReference>
<dbReference type="GO" id="GO:0003856">
    <property type="term" value="F:3-dehydroquinate synthase activity"/>
    <property type="evidence" value="ECO:0007669"/>
    <property type="project" value="UniProtKB-UniRule"/>
</dbReference>
<dbReference type="GO" id="GO:0003866">
    <property type="term" value="F:3-phosphoshikimate 1-carboxyvinyltransferase activity"/>
    <property type="evidence" value="ECO:0007669"/>
    <property type="project" value="UniProtKB-UniRule"/>
</dbReference>
<dbReference type="GO" id="GO:0005524">
    <property type="term" value="F:ATP binding"/>
    <property type="evidence" value="ECO:0007669"/>
    <property type="project" value="UniProtKB-UniRule"/>
</dbReference>
<dbReference type="GO" id="GO:0046872">
    <property type="term" value="F:metal ion binding"/>
    <property type="evidence" value="ECO:0007669"/>
    <property type="project" value="UniProtKB-UniRule"/>
</dbReference>
<dbReference type="GO" id="GO:0004764">
    <property type="term" value="F:shikimate 3-dehydrogenase (NADP+) activity"/>
    <property type="evidence" value="ECO:0007669"/>
    <property type="project" value="UniProtKB-UniRule"/>
</dbReference>
<dbReference type="GO" id="GO:0004765">
    <property type="term" value="F:shikimate kinase activity"/>
    <property type="evidence" value="ECO:0007669"/>
    <property type="project" value="UniProtKB-UniRule"/>
</dbReference>
<dbReference type="GO" id="GO:0008652">
    <property type="term" value="P:amino acid biosynthetic process"/>
    <property type="evidence" value="ECO:0007669"/>
    <property type="project" value="UniProtKB-KW"/>
</dbReference>
<dbReference type="GO" id="GO:0009073">
    <property type="term" value="P:aromatic amino acid family biosynthetic process"/>
    <property type="evidence" value="ECO:0007669"/>
    <property type="project" value="UniProtKB-UniRule"/>
</dbReference>
<dbReference type="GO" id="GO:0009423">
    <property type="term" value="P:chorismate biosynthetic process"/>
    <property type="evidence" value="ECO:0007669"/>
    <property type="project" value="UniProtKB-UniRule"/>
</dbReference>
<dbReference type="CDD" id="cd00502">
    <property type="entry name" value="DHQase_I"/>
    <property type="match status" value="1"/>
</dbReference>
<dbReference type="CDD" id="cd08195">
    <property type="entry name" value="DHQS"/>
    <property type="match status" value="1"/>
</dbReference>
<dbReference type="CDD" id="cd01556">
    <property type="entry name" value="EPSP_synthase"/>
    <property type="match status" value="1"/>
</dbReference>
<dbReference type="CDD" id="cd01065">
    <property type="entry name" value="NAD_bind_Shikimate_DH"/>
    <property type="match status" value="1"/>
</dbReference>
<dbReference type="CDD" id="cd00464">
    <property type="entry name" value="SK"/>
    <property type="match status" value="1"/>
</dbReference>
<dbReference type="FunFam" id="1.20.1090.10:FF:000007">
    <property type="entry name" value="Pentafunctional AROM polypeptide"/>
    <property type="match status" value="1"/>
</dbReference>
<dbReference type="FunFam" id="3.20.20.70:FF:000135">
    <property type="entry name" value="Pentafunctional AROM polypeptide"/>
    <property type="match status" value="1"/>
</dbReference>
<dbReference type="FunFam" id="3.40.50.1970:FF:000007">
    <property type="entry name" value="Pentafunctional AROM polypeptide"/>
    <property type="match status" value="1"/>
</dbReference>
<dbReference type="FunFam" id="3.40.50.300:FF:001256">
    <property type="entry name" value="Pentafunctional AROM polypeptide"/>
    <property type="match status" value="1"/>
</dbReference>
<dbReference type="FunFam" id="3.65.10.10:FF:000007">
    <property type="entry name" value="Pentafunctional AROM polypeptide"/>
    <property type="match status" value="1"/>
</dbReference>
<dbReference type="FunFam" id="3.65.10.10:FF:000008">
    <property type="entry name" value="Pentafunctional AROM polypeptide"/>
    <property type="match status" value="1"/>
</dbReference>
<dbReference type="Gene3D" id="3.40.50.1970">
    <property type="match status" value="1"/>
</dbReference>
<dbReference type="Gene3D" id="3.20.20.70">
    <property type="entry name" value="Aldolase class I"/>
    <property type="match status" value="1"/>
</dbReference>
<dbReference type="Gene3D" id="1.20.1090.10">
    <property type="entry name" value="Dehydroquinate synthase-like - alpha domain"/>
    <property type="match status" value="1"/>
</dbReference>
<dbReference type="Gene3D" id="3.65.10.10">
    <property type="entry name" value="Enolpyruvate transferase domain"/>
    <property type="match status" value="2"/>
</dbReference>
<dbReference type="Gene3D" id="3.40.50.10860">
    <property type="entry name" value="Leucine Dehydrogenase, chain A, domain 1"/>
    <property type="match status" value="1"/>
</dbReference>
<dbReference type="Gene3D" id="3.40.50.720">
    <property type="entry name" value="NAD(P)-binding Rossmann-like Domain"/>
    <property type="match status" value="1"/>
</dbReference>
<dbReference type="Gene3D" id="3.40.50.300">
    <property type="entry name" value="P-loop containing nucleotide triphosphate hydrolases"/>
    <property type="match status" value="1"/>
</dbReference>
<dbReference type="HAMAP" id="MF_00210">
    <property type="entry name" value="EPSP_synth"/>
    <property type="match status" value="1"/>
</dbReference>
<dbReference type="HAMAP" id="MF_03143">
    <property type="entry name" value="Pentafunct_AroM"/>
    <property type="match status" value="1"/>
</dbReference>
<dbReference type="HAMAP" id="MF_00109">
    <property type="entry name" value="Shikimate_kinase"/>
    <property type="match status" value="1"/>
</dbReference>
<dbReference type="InterPro" id="IPR018508">
    <property type="entry name" value="3-dehydroquinate_DH_AS"/>
</dbReference>
<dbReference type="InterPro" id="IPR013785">
    <property type="entry name" value="Aldolase_TIM"/>
</dbReference>
<dbReference type="InterPro" id="IPR046346">
    <property type="entry name" value="Aminoacid_DH-like_N_sf"/>
</dbReference>
<dbReference type="InterPro" id="IPR016037">
    <property type="entry name" value="DHQ_synth_AroB"/>
</dbReference>
<dbReference type="InterPro" id="IPR030960">
    <property type="entry name" value="DHQS/DOIS_N"/>
</dbReference>
<dbReference type="InterPro" id="IPR056179">
    <property type="entry name" value="DHQS_C"/>
</dbReference>
<dbReference type="InterPro" id="IPR001381">
    <property type="entry name" value="DHquinase_I"/>
</dbReference>
<dbReference type="InterPro" id="IPR001986">
    <property type="entry name" value="Enolpyruvate_Tfrase_dom"/>
</dbReference>
<dbReference type="InterPro" id="IPR036968">
    <property type="entry name" value="Enolpyruvate_Tfrase_sf"/>
</dbReference>
<dbReference type="InterPro" id="IPR006264">
    <property type="entry name" value="EPSP_synthase"/>
</dbReference>
<dbReference type="InterPro" id="IPR023193">
    <property type="entry name" value="EPSP_synthase_CS"/>
</dbReference>
<dbReference type="InterPro" id="IPR036291">
    <property type="entry name" value="NAD(P)-bd_dom_sf"/>
</dbReference>
<dbReference type="InterPro" id="IPR027417">
    <property type="entry name" value="P-loop_NTPase"/>
</dbReference>
<dbReference type="InterPro" id="IPR008289">
    <property type="entry name" value="Pentafunct_AroM"/>
</dbReference>
<dbReference type="InterPro" id="IPR013792">
    <property type="entry name" value="RNA3'P_cycl/enolpyr_Trfase_a/b"/>
</dbReference>
<dbReference type="InterPro" id="IPR041121">
    <property type="entry name" value="SDH_C"/>
</dbReference>
<dbReference type="InterPro" id="IPR031322">
    <property type="entry name" value="Shikimate/glucono_kinase"/>
</dbReference>
<dbReference type="InterPro" id="IPR013708">
    <property type="entry name" value="Shikimate_DH-bd_N"/>
</dbReference>
<dbReference type="InterPro" id="IPR010110">
    <property type="entry name" value="Shikimate_DH_AroM-type"/>
</dbReference>
<dbReference type="InterPro" id="IPR000623">
    <property type="entry name" value="Shikimate_kinase/TSH1"/>
</dbReference>
<dbReference type="InterPro" id="IPR023000">
    <property type="entry name" value="Shikimate_kinase_CS"/>
</dbReference>
<dbReference type="NCBIfam" id="TIGR01356">
    <property type="entry name" value="aroA"/>
    <property type="match status" value="1"/>
</dbReference>
<dbReference type="NCBIfam" id="TIGR01357">
    <property type="entry name" value="aroB"/>
    <property type="match status" value="1"/>
</dbReference>
<dbReference type="NCBIfam" id="TIGR01093">
    <property type="entry name" value="aroD"/>
    <property type="match status" value="1"/>
</dbReference>
<dbReference type="NCBIfam" id="TIGR01809">
    <property type="entry name" value="Shik-DH-AROM"/>
    <property type="match status" value="1"/>
</dbReference>
<dbReference type="PANTHER" id="PTHR21090">
    <property type="entry name" value="AROM/DEHYDROQUINATE SYNTHASE"/>
    <property type="match status" value="1"/>
</dbReference>
<dbReference type="PANTHER" id="PTHR21090:SF5">
    <property type="entry name" value="PENTAFUNCTIONAL AROM POLYPEPTIDE"/>
    <property type="match status" value="1"/>
</dbReference>
<dbReference type="Pfam" id="PF01761">
    <property type="entry name" value="DHQ_synthase"/>
    <property type="match status" value="1"/>
</dbReference>
<dbReference type="Pfam" id="PF24621">
    <property type="entry name" value="DHQS_C"/>
    <property type="match status" value="1"/>
</dbReference>
<dbReference type="Pfam" id="PF01487">
    <property type="entry name" value="DHquinase_I"/>
    <property type="match status" value="1"/>
</dbReference>
<dbReference type="Pfam" id="PF00275">
    <property type="entry name" value="EPSP_synthase"/>
    <property type="match status" value="1"/>
</dbReference>
<dbReference type="Pfam" id="PF18317">
    <property type="entry name" value="SDH_C"/>
    <property type="match status" value="1"/>
</dbReference>
<dbReference type="Pfam" id="PF08501">
    <property type="entry name" value="Shikimate_dh_N"/>
    <property type="match status" value="1"/>
</dbReference>
<dbReference type="Pfam" id="PF01202">
    <property type="entry name" value="SKI"/>
    <property type="match status" value="1"/>
</dbReference>
<dbReference type="PIRSF" id="PIRSF000514">
    <property type="entry name" value="Pentafunct_AroM"/>
    <property type="match status" value="1"/>
</dbReference>
<dbReference type="PRINTS" id="PR01100">
    <property type="entry name" value="SHIKIMTKNASE"/>
</dbReference>
<dbReference type="SUPFAM" id="SSF51569">
    <property type="entry name" value="Aldolase"/>
    <property type="match status" value="1"/>
</dbReference>
<dbReference type="SUPFAM" id="SSF53223">
    <property type="entry name" value="Aminoacid dehydrogenase-like, N-terminal domain"/>
    <property type="match status" value="1"/>
</dbReference>
<dbReference type="SUPFAM" id="SSF56796">
    <property type="entry name" value="Dehydroquinate synthase-like"/>
    <property type="match status" value="1"/>
</dbReference>
<dbReference type="SUPFAM" id="SSF55205">
    <property type="entry name" value="EPT/RTPC-like"/>
    <property type="match status" value="1"/>
</dbReference>
<dbReference type="SUPFAM" id="SSF51735">
    <property type="entry name" value="NAD(P)-binding Rossmann-fold domains"/>
    <property type="match status" value="1"/>
</dbReference>
<dbReference type="SUPFAM" id="SSF52540">
    <property type="entry name" value="P-loop containing nucleoside triphosphate hydrolases"/>
    <property type="match status" value="1"/>
</dbReference>
<dbReference type="PROSITE" id="PS01028">
    <property type="entry name" value="DEHYDROQUINASE_I"/>
    <property type="match status" value="1"/>
</dbReference>
<dbReference type="PROSITE" id="PS00104">
    <property type="entry name" value="EPSP_SYNTHASE_1"/>
    <property type="match status" value="1"/>
</dbReference>
<dbReference type="PROSITE" id="PS00885">
    <property type="entry name" value="EPSP_SYNTHASE_2"/>
    <property type="match status" value="1"/>
</dbReference>
<dbReference type="PROSITE" id="PS01128">
    <property type="entry name" value="SHIKIMATE_KINASE"/>
    <property type="match status" value="1"/>
</dbReference>
<keyword id="KW-0028">Amino-acid biosynthesis</keyword>
<keyword id="KW-0057">Aromatic amino acid biosynthesis</keyword>
<keyword id="KW-0067">ATP-binding</keyword>
<keyword id="KW-0963">Cytoplasm</keyword>
<keyword id="KW-0418">Kinase</keyword>
<keyword id="KW-0456">Lyase</keyword>
<keyword id="KW-0479">Metal-binding</keyword>
<keyword id="KW-0511">Multifunctional enzyme</keyword>
<keyword id="KW-0521">NADP</keyword>
<keyword id="KW-0547">Nucleotide-binding</keyword>
<keyword id="KW-0560">Oxidoreductase</keyword>
<keyword id="KW-1185">Reference proteome</keyword>
<keyword id="KW-0808">Transferase</keyword>
<keyword id="KW-0862">Zinc</keyword>
<name>ARO1_ASPTN</name>
<accession>Q0D0F3</accession>
<proteinExistence type="inferred from homology"/>
<feature type="chain" id="PRO_0000406708" description="Pentafunctional AROM polypeptide">
    <location>
        <begin position="1"/>
        <end position="1581"/>
    </location>
</feature>
<feature type="region of interest" description="3-dehydroquinate synthase">
    <location>
        <begin position="1"/>
        <end position="384"/>
    </location>
</feature>
<feature type="region of interest" description="EPSP synthase">
    <location>
        <begin position="397"/>
        <end position="842"/>
    </location>
</feature>
<feature type="region of interest" description="Shikimate kinase">
    <location>
        <begin position="864"/>
        <end position="1056"/>
    </location>
</feature>
<feature type="region of interest" description="3-dehydroquinase">
    <location>
        <begin position="1057"/>
        <end position="1277"/>
    </location>
</feature>
<feature type="region of interest" description="Shikimate dehydrogenase">
    <location>
        <begin position="1290"/>
        <end position="1581"/>
    </location>
</feature>
<feature type="active site" description="Proton acceptor; for 3-dehydroquinate synthase activity" evidence="1">
    <location>
        <position position="260"/>
    </location>
</feature>
<feature type="active site" description="Proton acceptor; for 3-dehydroquinate synthase activity" evidence="1">
    <location>
        <position position="275"/>
    </location>
</feature>
<feature type="active site" description="For EPSP synthase activity" evidence="1">
    <location>
        <position position="824"/>
    </location>
</feature>
<feature type="active site" description="Proton acceptor; for 3-dehydroquinate dehydratase activity" evidence="1">
    <location>
        <position position="1180"/>
    </location>
</feature>
<feature type="active site" description="Schiff-base intermediate with substrate; for 3-dehydroquinate dehydratase activity" evidence="1">
    <location>
        <position position="1208"/>
    </location>
</feature>
<feature type="binding site" evidence="1">
    <location>
        <begin position="44"/>
        <end position="46"/>
    </location>
    <ligand>
        <name>NAD(+)</name>
        <dbReference type="ChEBI" id="CHEBI:57540"/>
    </ligand>
</feature>
<feature type="binding site" evidence="1">
    <location>
        <begin position="81"/>
        <end position="84"/>
    </location>
    <ligand>
        <name>NAD(+)</name>
        <dbReference type="ChEBI" id="CHEBI:57540"/>
    </ligand>
</feature>
<feature type="binding site" evidence="1">
    <location>
        <begin position="114"/>
        <end position="116"/>
    </location>
    <ligand>
        <name>NAD(+)</name>
        <dbReference type="ChEBI" id="CHEBI:57540"/>
    </ligand>
</feature>
<feature type="binding site" evidence="1">
    <location>
        <position position="119"/>
    </location>
    <ligand>
        <name>NAD(+)</name>
        <dbReference type="ChEBI" id="CHEBI:57540"/>
    </ligand>
</feature>
<feature type="binding site" evidence="1">
    <location>
        <position position="130"/>
    </location>
    <ligand>
        <name>7-phospho-2-dehydro-3-deoxy-D-arabino-heptonate</name>
        <dbReference type="ChEBI" id="CHEBI:58394"/>
    </ligand>
</feature>
<feature type="binding site" evidence="1">
    <location>
        <begin position="139"/>
        <end position="140"/>
    </location>
    <ligand>
        <name>NAD(+)</name>
        <dbReference type="ChEBI" id="CHEBI:57540"/>
    </ligand>
</feature>
<feature type="binding site" evidence="1">
    <location>
        <position position="146"/>
    </location>
    <ligand>
        <name>7-phospho-2-dehydro-3-deoxy-D-arabino-heptonate</name>
        <dbReference type="ChEBI" id="CHEBI:58394"/>
    </ligand>
</feature>
<feature type="binding site" evidence="1">
    <location>
        <position position="152"/>
    </location>
    <ligand>
        <name>7-phospho-2-dehydro-3-deoxy-D-arabino-heptonate</name>
        <dbReference type="ChEBI" id="CHEBI:58394"/>
    </ligand>
</feature>
<feature type="binding site" evidence="1">
    <location>
        <position position="161"/>
    </location>
    <ligand>
        <name>NAD(+)</name>
        <dbReference type="ChEBI" id="CHEBI:57540"/>
    </ligand>
</feature>
<feature type="binding site" evidence="1">
    <location>
        <position position="162"/>
    </location>
    <ligand>
        <name>7-phospho-2-dehydro-3-deoxy-D-arabino-heptonate</name>
        <dbReference type="ChEBI" id="CHEBI:58394"/>
    </ligand>
</feature>
<feature type="binding site" evidence="1">
    <location>
        <begin position="179"/>
        <end position="182"/>
    </location>
    <ligand>
        <name>NAD(+)</name>
        <dbReference type="ChEBI" id="CHEBI:57540"/>
    </ligand>
</feature>
<feature type="binding site" evidence="1">
    <location>
        <position position="190"/>
    </location>
    <ligand>
        <name>NAD(+)</name>
        <dbReference type="ChEBI" id="CHEBI:57540"/>
    </ligand>
</feature>
<feature type="binding site" evidence="1">
    <location>
        <begin position="194"/>
        <end position="197"/>
    </location>
    <ligand>
        <name>7-phospho-2-dehydro-3-deoxy-D-arabino-heptonate</name>
        <dbReference type="ChEBI" id="CHEBI:58394"/>
    </ligand>
</feature>
<feature type="binding site" evidence="1">
    <location>
        <position position="194"/>
    </location>
    <ligand>
        <name>Zn(2+)</name>
        <dbReference type="ChEBI" id="CHEBI:29105"/>
        <note>catalytic</note>
    </ligand>
</feature>
<feature type="binding site" evidence="1">
    <location>
        <position position="250"/>
    </location>
    <ligand>
        <name>7-phospho-2-dehydro-3-deoxy-D-arabino-heptonate</name>
        <dbReference type="ChEBI" id="CHEBI:58394"/>
    </ligand>
</feature>
<feature type="binding site" evidence="1">
    <location>
        <begin position="264"/>
        <end position="268"/>
    </location>
    <ligand>
        <name>7-phospho-2-dehydro-3-deoxy-D-arabino-heptonate</name>
        <dbReference type="ChEBI" id="CHEBI:58394"/>
    </ligand>
</feature>
<feature type="binding site" evidence="1">
    <location>
        <position position="271"/>
    </location>
    <ligand>
        <name>7-phospho-2-dehydro-3-deoxy-D-arabino-heptonate</name>
        <dbReference type="ChEBI" id="CHEBI:58394"/>
    </ligand>
</feature>
<feature type="binding site" evidence="1">
    <location>
        <position position="271"/>
    </location>
    <ligand>
        <name>Zn(2+)</name>
        <dbReference type="ChEBI" id="CHEBI:29105"/>
        <note>catalytic</note>
    </ligand>
</feature>
<feature type="binding site" evidence="1">
    <location>
        <position position="287"/>
    </location>
    <ligand>
        <name>7-phospho-2-dehydro-3-deoxy-D-arabino-heptonate</name>
        <dbReference type="ChEBI" id="CHEBI:58394"/>
    </ligand>
</feature>
<feature type="binding site" evidence="1">
    <location>
        <position position="287"/>
    </location>
    <ligand>
        <name>Zn(2+)</name>
        <dbReference type="ChEBI" id="CHEBI:29105"/>
        <note>catalytic</note>
    </ligand>
</feature>
<feature type="binding site" evidence="1">
    <location>
        <position position="356"/>
    </location>
    <ligand>
        <name>7-phospho-2-dehydro-3-deoxy-D-arabino-heptonate</name>
        <dbReference type="ChEBI" id="CHEBI:58394"/>
    </ligand>
</feature>
<feature type="binding site" evidence="1">
    <location>
        <begin position="871"/>
        <end position="878"/>
    </location>
    <ligand>
        <name>ATP</name>
        <dbReference type="ChEBI" id="CHEBI:30616"/>
    </ligand>
</feature>
<protein>
    <recommendedName>
        <fullName evidence="1">Pentafunctional AROM polypeptide</fullName>
    </recommendedName>
    <domain>
        <recommendedName>
            <fullName evidence="1">3-dehydroquinate synthase</fullName>
            <shortName evidence="1">DHQS</shortName>
            <ecNumber evidence="1">4.2.3.4</ecNumber>
        </recommendedName>
    </domain>
    <domain>
        <recommendedName>
            <fullName evidence="1">3-phosphoshikimate 1-carboxyvinyltransferase</fullName>
            <ecNumber evidence="1">2.5.1.19</ecNumber>
        </recommendedName>
        <alternativeName>
            <fullName evidence="1">5-enolpyruvylshikimate-3-phosphate synthase</fullName>
            <shortName evidence="1">EPSP synthase</shortName>
            <shortName evidence="1">EPSPS</shortName>
        </alternativeName>
    </domain>
    <domain>
        <recommendedName>
            <fullName evidence="1">Shikimate kinase</fullName>
            <shortName evidence="1">SK</shortName>
            <ecNumber evidence="1">2.7.1.71</ecNumber>
        </recommendedName>
    </domain>
    <domain>
        <recommendedName>
            <fullName evidence="1">3-dehydroquinate dehydratase</fullName>
            <shortName evidence="1">3-dehydroquinase</shortName>
            <ecNumber evidence="1">4.2.1.10</ecNumber>
        </recommendedName>
    </domain>
    <domain>
        <recommendedName>
            <fullName evidence="1">Shikimate dehydrogenase</fullName>
            <ecNumber evidence="1">1.1.1.25</ecNumber>
        </recommendedName>
    </domain>
</protein>
<reference key="1">
    <citation type="submission" date="2005-09" db="EMBL/GenBank/DDBJ databases">
        <title>Annotation of the Aspergillus terreus NIH2624 genome.</title>
        <authorList>
            <person name="Birren B.W."/>
            <person name="Lander E.S."/>
            <person name="Galagan J.E."/>
            <person name="Nusbaum C."/>
            <person name="Devon K."/>
            <person name="Henn M."/>
            <person name="Ma L.-J."/>
            <person name="Jaffe D.B."/>
            <person name="Butler J."/>
            <person name="Alvarez P."/>
            <person name="Gnerre S."/>
            <person name="Grabherr M."/>
            <person name="Kleber M."/>
            <person name="Mauceli E.W."/>
            <person name="Brockman W."/>
            <person name="Rounsley S."/>
            <person name="Young S.K."/>
            <person name="LaButti K."/>
            <person name="Pushparaj V."/>
            <person name="DeCaprio D."/>
            <person name="Crawford M."/>
            <person name="Koehrsen M."/>
            <person name="Engels R."/>
            <person name="Montgomery P."/>
            <person name="Pearson M."/>
            <person name="Howarth C."/>
            <person name="Larson L."/>
            <person name="Luoma S."/>
            <person name="White J."/>
            <person name="Alvarado L."/>
            <person name="Kodira C.D."/>
            <person name="Zeng Q."/>
            <person name="Oleary S."/>
            <person name="Yandava C."/>
            <person name="Denning D.W."/>
            <person name="Nierman W.C."/>
            <person name="Milne T."/>
            <person name="Madden K."/>
        </authorList>
    </citation>
    <scope>NUCLEOTIDE SEQUENCE [LARGE SCALE GENOMIC DNA]</scope>
    <source>
        <strain>NIH 2624 / FGSC A1156</strain>
    </source>
</reference>
<organism>
    <name type="scientific">Aspergillus terreus (strain NIH 2624 / FGSC A1156)</name>
    <dbReference type="NCBI Taxonomy" id="341663"/>
    <lineage>
        <taxon>Eukaryota</taxon>
        <taxon>Fungi</taxon>
        <taxon>Dikarya</taxon>
        <taxon>Ascomycota</taxon>
        <taxon>Pezizomycotina</taxon>
        <taxon>Eurotiomycetes</taxon>
        <taxon>Eurotiomycetidae</taxon>
        <taxon>Eurotiales</taxon>
        <taxon>Aspergillaceae</taxon>
        <taxon>Aspergillus</taxon>
        <taxon>Aspergillus subgen. Circumdati</taxon>
    </lineage>
</organism>
<sequence length="1581" mass="172060">MPEPTKISILGKESIVADFGLWRNYVAKDLISGCPSTTYVLITDTNIGSIYTPSFQKTFEEAAAAISPSPRLLVYHAPPGEVSKSRQTKADIEDWMLSQSPPCGRDTVVIALGGGVIGDLTGFIAATYMRGVRYVQVPTTLLAMVDSSIGGKTAIDTPLGKNLIGAIWQPTRIYIDLEFLETLPVREFINGMAEVIKTAAISSEEEFTALEENAETILSAVRREVKPGQHRFAGLEDILKARILASARHKAYVVSEDEREGGLRNLLNWGHSIGHAIEAILTPQILHGECVAIGMVKEAELARHLGILKNVAVARIVKCIAAYGLPTSLKDSRIRKLTAGKHCSVDQLLFNMALDKKNDGPKKKIVLLSAIGQPYEPKASVVPNEDISVVLAPSVEVHPGVPKESNVVCAPPGSKSISNRALVLAALGSGTCRIKNLLYSDDTEVMMNALERIGAATFSWEEEGEVLVVNGKGGDIKASPTPLYLGNAGTASRFLTTVVTLATASTVDHSVLTGNNRMKQRPIGDLVDALTANGASVEYLEKKGSLPLKIGAGGGFAGGRINLAAKVSSQFVSSLLMCAPYAKEPVTLKLVGGKPISEPYIEMTTAMMRSFGIEVQKSTTEEFTYHIPQGRYVNPAEYVVESDASSATYPLAIAAVSGTTCTIPNIGSKSLQGDARFAVDVLRPMGCTVTQTETSTTVTGPADGILRPLPNVDMEPMTDAFLGASVLAAIARGEGSNHTTRIYGIANQRVKECNRIKAMKDELAKFGVVCREHDDGLEIDGIDRSTLRQPAGGVFCYDDHRVAFSFSVLSLVTPQPTLILEKECVGKTWPGWWDTLRQLFSVKLEGRELKEEETPVLTGAEKASASVFIIGMRGAGKTTSGKWVAKALNRPFVDLDTELETNEGMAIPEIIKQRGWQGFRDAELSLLQRTLKERATGYVFACGGGIVEIPEARKLLIDYHKNKGNVLLIMRDIKQVMDFLSIDQTRPAYVEDMMGVWLRRKPWFNECSNIQYYSQHASSSGLTRASEDFERFLKVVTGQVDNLSLIKQKKHSFFVSLTLPDLRSASDILDEVCVGSDAVELRVDLLKDPASDSDIPSVDYVAEQMSFLRSRTALPLIFTIRTKSQGGRFPDDAHDAAMDLYRLAMRSGSEFVDLEIAFPDEMLRAVTEMKGYSKIIASHHDPKGELSWSNMSWIKYYNRALEYGDVIKLVGVAKNLDDNTALRKFKTWAEEAHDVPMIAINMGDNGQLSRILNGFMTPVSHPSLPFKAAPGQLSATEIRRGLSLMGEIKKKRFAIFGNPVSVSRSPALHNTLFQQSGLPHEYTRLETSNAEDVKDFIRSPDFGGASVTIPLKLDIMPLLDEIAREAEIIGAVNTIVPVNNGSDKTRLVGYNTDWQGMILSLRNAGVYGANKDASAVVVGGGGTARAAIFALHNMGYSPIYVIGRSASKLQSMVETFPTGYNIRVVDSSEQIDTVPQVAIGTIPADRPIDPGMRETLCHMFERAQELDADIVKTGEKAPRVLLEMAYKPAVTALMQLASDAGWLTIPGLEVLVGQGWYQFKHWTGISPLYKDARTAVLGDSA</sequence>